<sequence length="363" mass="40045">MTPPLLEIRNVTRRFGDFTAVDNVSLTINTGEFFTLLGPSGCGKTTLLRMLAGFDQPDSGEIRLNGQDLAGVEPEKRPVHTVFQSYALFPHMSVAQNIAFPLKMAGVAKSEIDARVEQALKDVRLADKGGRMPTQLSGGQRQRVAIARALVNRPRLLLLDEPLSALDAKLREEMQIELINLQKDVGITFVYVTHDQGEALALSHRIAVMNQGRVEQLDAPETIYSFPRSRFVADFIGQCNLLDATVEAVDGERVRIDLRGLGEVQALKSFDAQPGEACVLTLRPEKIRLAQSVTADSDEVHFRGRVAELLYLGDVTLYIVELENGERLETLLPNATPGRAKFFEVGDAVEAAWRFDAGHLVRA</sequence>
<keyword id="KW-0067">ATP-binding</keyword>
<keyword id="KW-0997">Cell inner membrane</keyword>
<keyword id="KW-1003">Cell membrane</keyword>
<keyword id="KW-0472">Membrane</keyword>
<keyword id="KW-0547">Nucleotide-binding</keyword>
<keyword id="KW-1185">Reference proteome</keyword>
<keyword id="KW-1278">Translocase</keyword>
<keyword id="KW-0813">Transport</keyword>
<dbReference type="EC" id="7.6.2.11" evidence="1"/>
<dbReference type="EMBL" id="AE004091">
    <property type="protein sequence ID" value="AAG06995.1"/>
    <property type="molecule type" value="Genomic_DNA"/>
</dbReference>
<dbReference type="PIR" id="D83194">
    <property type="entry name" value="D83194"/>
</dbReference>
<dbReference type="RefSeq" id="WP_003119359.1">
    <property type="nucleotide sequence ID" value="NZ_QZGE01000001.1"/>
</dbReference>
<dbReference type="SMR" id="Q9HY19"/>
<dbReference type="STRING" id="208964.PA3607"/>
<dbReference type="PaxDb" id="208964-PA3607"/>
<dbReference type="DNASU" id="880429"/>
<dbReference type="KEGG" id="pae:PA3607"/>
<dbReference type="PATRIC" id="fig|208964.12.peg.3774"/>
<dbReference type="PseudoCAP" id="PA3607"/>
<dbReference type="HOGENOM" id="CLU_000604_1_1_6"/>
<dbReference type="InParanoid" id="Q9HY19"/>
<dbReference type="OrthoDB" id="9802264at2"/>
<dbReference type="PhylomeDB" id="Q9HY19"/>
<dbReference type="BioCyc" id="PAER208964:G1FZ6-3676-MONOMER"/>
<dbReference type="Proteomes" id="UP000002438">
    <property type="component" value="Chromosome"/>
</dbReference>
<dbReference type="GO" id="GO:0043190">
    <property type="term" value="C:ATP-binding cassette (ABC) transporter complex"/>
    <property type="evidence" value="ECO:0007669"/>
    <property type="project" value="InterPro"/>
</dbReference>
<dbReference type="GO" id="GO:0015417">
    <property type="term" value="F:ABC-type polyamine transporter activity"/>
    <property type="evidence" value="ECO:0007669"/>
    <property type="project" value="UniProtKB-EC"/>
</dbReference>
<dbReference type="GO" id="GO:0005524">
    <property type="term" value="F:ATP binding"/>
    <property type="evidence" value="ECO:0007669"/>
    <property type="project" value="UniProtKB-KW"/>
</dbReference>
<dbReference type="GO" id="GO:0016887">
    <property type="term" value="F:ATP hydrolysis activity"/>
    <property type="evidence" value="ECO:0007669"/>
    <property type="project" value="InterPro"/>
</dbReference>
<dbReference type="FunFam" id="3.40.50.300:FF:000133">
    <property type="entry name" value="Spermidine/putrescine import ATP-binding protein PotA"/>
    <property type="match status" value="1"/>
</dbReference>
<dbReference type="Gene3D" id="2.40.50.100">
    <property type="match status" value="1"/>
</dbReference>
<dbReference type="Gene3D" id="3.40.50.300">
    <property type="entry name" value="P-loop containing nucleotide triphosphate hydrolases"/>
    <property type="match status" value="1"/>
</dbReference>
<dbReference type="InterPro" id="IPR003593">
    <property type="entry name" value="AAA+_ATPase"/>
</dbReference>
<dbReference type="InterPro" id="IPR050093">
    <property type="entry name" value="ABC_SmlMolc_Importer"/>
</dbReference>
<dbReference type="InterPro" id="IPR003439">
    <property type="entry name" value="ABC_transporter-like_ATP-bd"/>
</dbReference>
<dbReference type="InterPro" id="IPR017871">
    <property type="entry name" value="ABC_transporter-like_CS"/>
</dbReference>
<dbReference type="InterPro" id="IPR008995">
    <property type="entry name" value="Mo/tungstate-bd_C_term_dom"/>
</dbReference>
<dbReference type="InterPro" id="IPR027417">
    <property type="entry name" value="P-loop_NTPase"/>
</dbReference>
<dbReference type="InterPro" id="IPR005893">
    <property type="entry name" value="PotA-like"/>
</dbReference>
<dbReference type="InterPro" id="IPR013611">
    <property type="entry name" value="Transp-assoc_OB_typ2"/>
</dbReference>
<dbReference type="NCBIfam" id="TIGR01187">
    <property type="entry name" value="potA"/>
    <property type="match status" value="1"/>
</dbReference>
<dbReference type="PANTHER" id="PTHR42781">
    <property type="entry name" value="SPERMIDINE/PUTRESCINE IMPORT ATP-BINDING PROTEIN POTA"/>
    <property type="match status" value="1"/>
</dbReference>
<dbReference type="PANTHER" id="PTHR42781:SF4">
    <property type="entry name" value="SPERMIDINE_PUTRESCINE IMPORT ATP-BINDING PROTEIN POTA"/>
    <property type="match status" value="1"/>
</dbReference>
<dbReference type="Pfam" id="PF00005">
    <property type="entry name" value="ABC_tran"/>
    <property type="match status" value="1"/>
</dbReference>
<dbReference type="Pfam" id="PF08402">
    <property type="entry name" value="TOBE_2"/>
    <property type="match status" value="1"/>
</dbReference>
<dbReference type="SMART" id="SM00382">
    <property type="entry name" value="AAA"/>
    <property type="match status" value="1"/>
</dbReference>
<dbReference type="SUPFAM" id="SSF50331">
    <property type="entry name" value="MOP-like"/>
    <property type="match status" value="1"/>
</dbReference>
<dbReference type="SUPFAM" id="SSF52540">
    <property type="entry name" value="P-loop containing nucleoside triphosphate hydrolases"/>
    <property type="match status" value="1"/>
</dbReference>
<dbReference type="PROSITE" id="PS00211">
    <property type="entry name" value="ABC_TRANSPORTER_1"/>
    <property type="match status" value="1"/>
</dbReference>
<dbReference type="PROSITE" id="PS50893">
    <property type="entry name" value="ABC_TRANSPORTER_2"/>
    <property type="match status" value="1"/>
</dbReference>
<dbReference type="PROSITE" id="PS51305">
    <property type="entry name" value="POTA"/>
    <property type="match status" value="1"/>
</dbReference>
<name>POTA2_PSEAE</name>
<evidence type="ECO:0000255" key="1">
    <source>
        <dbReference type="HAMAP-Rule" id="MF_01726"/>
    </source>
</evidence>
<accession>Q9HY19</accession>
<reference key="1">
    <citation type="journal article" date="2000" name="Nature">
        <title>Complete genome sequence of Pseudomonas aeruginosa PAO1, an opportunistic pathogen.</title>
        <authorList>
            <person name="Stover C.K."/>
            <person name="Pham X.-Q.T."/>
            <person name="Erwin A.L."/>
            <person name="Mizoguchi S.D."/>
            <person name="Warrener P."/>
            <person name="Hickey M.J."/>
            <person name="Brinkman F.S.L."/>
            <person name="Hufnagle W.O."/>
            <person name="Kowalik D.J."/>
            <person name="Lagrou M."/>
            <person name="Garber R.L."/>
            <person name="Goltry L."/>
            <person name="Tolentino E."/>
            <person name="Westbrock-Wadman S."/>
            <person name="Yuan Y."/>
            <person name="Brody L.L."/>
            <person name="Coulter S.N."/>
            <person name="Folger K.R."/>
            <person name="Kas A."/>
            <person name="Larbig K."/>
            <person name="Lim R.M."/>
            <person name="Smith K.A."/>
            <person name="Spencer D.H."/>
            <person name="Wong G.K.-S."/>
            <person name="Wu Z."/>
            <person name="Paulsen I.T."/>
            <person name="Reizer J."/>
            <person name="Saier M.H. Jr."/>
            <person name="Hancock R.E.W."/>
            <person name="Lory S."/>
            <person name="Olson M.V."/>
        </authorList>
    </citation>
    <scope>NUCLEOTIDE SEQUENCE [LARGE SCALE GENOMIC DNA]</scope>
    <source>
        <strain>ATCC 15692 / DSM 22644 / CIP 104116 / JCM 14847 / LMG 12228 / 1C / PRS 101 / PAO1</strain>
    </source>
</reference>
<gene>
    <name evidence="1" type="primary">potA2</name>
    <name type="ordered locus">PA3607</name>
</gene>
<comment type="function">
    <text evidence="1">Part of the ABC transporter complex PotABCD involved in spermidine/putrescine import. Responsible for energy coupling to the transport system.</text>
</comment>
<comment type="catalytic activity">
    <reaction evidence="1">
        <text>ATP + H2O + polyamine-[polyamine-binding protein]Side 1 = ADP + phosphate + polyamineSide 2 + [polyamine-binding protein]Side 1.</text>
        <dbReference type="EC" id="7.6.2.11"/>
    </reaction>
</comment>
<comment type="subunit">
    <text evidence="1">The complex is composed of two ATP-binding proteins (PotA), two transmembrane proteins (PotB and PotC) and a solute-binding protein (PotD).</text>
</comment>
<comment type="subcellular location">
    <subcellularLocation>
        <location evidence="1">Cell inner membrane</location>
        <topology evidence="1">Peripheral membrane protein</topology>
    </subcellularLocation>
</comment>
<comment type="similarity">
    <text evidence="1">Belongs to the ABC transporter superfamily. Spermidine/putrescine importer (TC 3.A.1.11.1) family.</text>
</comment>
<organism>
    <name type="scientific">Pseudomonas aeruginosa (strain ATCC 15692 / DSM 22644 / CIP 104116 / JCM 14847 / LMG 12228 / 1C / PRS 101 / PAO1)</name>
    <dbReference type="NCBI Taxonomy" id="208964"/>
    <lineage>
        <taxon>Bacteria</taxon>
        <taxon>Pseudomonadati</taxon>
        <taxon>Pseudomonadota</taxon>
        <taxon>Gammaproteobacteria</taxon>
        <taxon>Pseudomonadales</taxon>
        <taxon>Pseudomonadaceae</taxon>
        <taxon>Pseudomonas</taxon>
    </lineage>
</organism>
<protein>
    <recommendedName>
        <fullName evidence="1">Spermidine/putrescine import ATP-binding protein PotA 2</fullName>
        <ecNumber evidence="1">7.6.2.11</ecNumber>
    </recommendedName>
</protein>
<feature type="chain" id="PRO_0000286273" description="Spermidine/putrescine import ATP-binding protein PotA 2">
    <location>
        <begin position="1"/>
        <end position="363"/>
    </location>
</feature>
<feature type="domain" description="ABC transporter" evidence="1">
    <location>
        <begin position="6"/>
        <end position="236"/>
    </location>
</feature>
<feature type="binding site" evidence="1">
    <location>
        <begin position="38"/>
        <end position="45"/>
    </location>
    <ligand>
        <name>ATP</name>
        <dbReference type="ChEBI" id="CHEBI:30616"/>
    </ligand>
</feature>
<proteinExistence type="inferred from homology"/>